<gene>
    <name evidence="1" type="primary">mobA</name>
    <name type="ordered locus">Sputcn32_3882</name>
</gene>
<accession>A4YCA5</accession>
<name>MOBA_SHEPC</name>
<organism>
    <name type="scientific">Shewanella putrefaciens (strain CN-32 / ATCC BAA-453)</name>
    <dbReference type="NCBI Taxonomy" id="319224"/>
    <lineage>
        <taxon>Bacteria</taxon>
        <taxon>Pseudomonadati</taxon>
        <taxon>Pseudomonadota</taxon>
        <taxon>Gammaproteobacteria</taxon>
        <taxon>Alteromonadales</taxon>
        <taxon>Shewanellaceae</taxon>
        <taxon>Shewanella</taxon>
    </lineage>
</organism>
<sequence length="195" mass="21547">MPLHIDAVILAGGMARRMGGDDKGLVELNGQPMIKHTIDRIKPQVKEILINANRNQTRYAEFGFKVISDEHSGFLGPLAGMLAALGQTKADYLLTVPCDSPQLPMDLVERMLNAIETKGADMAVASNGEQEQPVVLLMKPSLRDSMEAFLKAGDRKILLWYAKQNYAVATFADQPNAFMNINTLEEKQQFALDQT</sequence>
<feature type="chain" id="PRO_1000019150" description="Molybdenum cofactor guanylyltransferase">
    <location>
        <begin position="1"/>
        <end position="195"/>
    </location>
</feature>
<feature type="binding site" evidence="1">
    <location>
        <begin position="10"/>
        <end position="12"/>
    </location>
    <ligand>
        <name>GTP</name>
        <dbReference type="ChEBI" id="CHEBI:37565"/>
    </ligand>
</feature>
<feature type="binding site" evidence="1">
    <location>
        <position position="23"/>
    </location>
    <ligand>
        <name>GTP</name>
        <dbReference type="ChEBI" id="CHEBI:37565"/>
    </ligand>
</feature>
<feature type="binding site" evidence="1">
    <location>
        <position position="51"/>
    </location>
    <ligand>
        <name>GTP</name>
        <dbReference type="ChEBI" id="CHEBI:37565"/>
    </ligand>
</feature>
<feature type="binding site" evidence="1">
    <location>
        <position position="69"/>
    </location>
    <ligand>
        <name>GTP</name>
        <dbReference type="ChEBI" id="CHEBI:37565"/>
    </ligand>
</feature>
<feature type="binding site" evidence="1">
    <location>
        <position position="99"/>
    </location>
    <ligand>
        <name>GTP</name>
        <dbReference type="ChEBI" id="CHEBI:37565"/>
    </ligand>
</feature>
<feature type="binding site" evidence="1">
    <location>
        <position position="99"/>
    </location>
    <ligand>
        <name>Mg(2+)</name>
        <dbReference type="ChEBI" id="CHEBI:18420"/>
    </ligand>
</feature>
<comment type="function">
    <text evidence="1">Transfers a GMP moiety from GTP to Mo-molybdopterin (Mo-MPT) cofactor (Moco or molybdenum cofactor) to form Mo-molybdopterin guanine dinucleotide (Mo-MGD) cofactor.</text>
</comment>
<comment type="catalytic activity">
    <reaction evidence="1">
        <text>Mo-molybdopterin + GTP + H(+) = Mo-molybdopterin guanine dinucleotide + diphosphate</text>
        <dbReference type="Rhea" id="RHEA:34243"/>
        <dbReference type="ChEBI" id="CHEBI:15378"/>
        <dbReference type="ChEBI" id="CHEBI:33019"/>
        <dbReference type="ChEBI" id="CHEBI:37565"/>
        <dbReference type="ChEBI" id="CHEBI:71302"/>
        <dbReference type="ChEBI" id="CHEBI:71310"/>
        <dbReference type="EC" id="2.7.7.77"/>
    </reaction>
</comment>
<comment type="cofactor">
    <cofactor evidence="1">
        <name>Mg(2+)</name>
        <dbReference type="ChEBI" id="CHEBI:18420"/>
    </cofactor>
</comment>
<comment type="subunit">
    <text evidence="1">Monomer.</text>
</comment>
<comment type="subcellular location">
    <subcellularLocation>
        <location evidence="1">Cytoplasm</location>
    </subcellularLocation>
</comment>
<comment type="domain">
    <text evidence="1">The N-terminal domain determines nucleotide recognition and specific binding, while the C-terminal domain determines the specific binding to the target protein.</text>
</comment>
<comment type="similarity">
    <text evidence="1">Belongs to the MobA family.</text>
</comment>
<evidence type="ECO:0000255" key="1">
    <source>
        <dbReference type="HAMAP-Rule" id="MF_00316"/>
    </source>
</evidence>
<proteinExistence type="inferred from homology"/>
<protein>
    <recommendedName>
        <fullName evidence="1">Molybdenum cofactor guanylyltransferase</fullName>
        <shortName evidence="1">MoCo guanylyltransferase</shortName>
        <ecNumber evidence="1">2.7.7.77</ecNumber>
    </recommendedName>
    <alternativeName>
        <fullName evidence="1">GTP:molybdopterin guanylyltransferase</fullName>
    </alternativeName>
    <alternativeName>
        <fullName evidence="1">Mo-MPT guanylyltransferase</fullName>
    </alternativeName>
    <alternativeName>
        <fullName evidence="1">Molybdopterin guanylyltransferase</fullName>
    </alternativeName>
    <alternativeName>
        <fullName evidence="1">Molybdopterin-guanine dinucleotide synthase</fullName>
        <shortName evidence="1">MGD synthase</shortName>
    </alternativeName>
</protein>
<keyword id="KW-0963">Cytoplasm</keyword>
<keyword id="KW-0342">GTP-binding</keyword>
<keyword id="KW-0460">Magnesium</keyword>
<keyword id="KW-0479">Metal-binding</keyword>
<keyword id="KW-0501">Molybdenum cofactor biosynthesis</keyword>
<keyword id="KW-0547">Nucleotide-binding</keyword>
<keyword id="KW-0808">Transferase</keyword>
<dbReference type="EC" id="2.7.7.77" evidence="1"/>
<dbReference type="EMBL" id="CP000681">
    <property type="protein sequence ID" value="ABP77588.1"/>
    <property type="molecule type" value="Genomic_DNA"/>
</dbReference>
<dbReference type="SMR" id="A4YCA5"/>
<dbReference type="STRING" id="319224.Sputcn32_3882"/>
<dbReference type="KEGG" id="spc:Sputcn32_3882"/>
<dbReference type="eggNOG" id="COG0746">
    <property type="taxonomic scope" value="Bacteria"/>
</dbReference>
<dbReference type="HOGENOM" id="CLU_055597_5_1_6"/>
<dbReference type="GO" id="GO:0005737">
    <property type="term" value="C:cytoplasm"/>
    <property type="evidence" value="ECO:0007669"/>
    <property type="project" value="UniProtKB-SubCell"/>
</dbReference>
<dbReference type="GO" id="GO:0005525">
    <property type="term" value="F:GTP binding"/>
    <property type="evidence" value="ECO:0007669"/>
    <property type="project" value="UniProtKB-UniRule"/>
</dbReference>
<dbReference type="GO" id="GO:0046872">
    <property type="term" value="F:metal ion binding"/>
    <property type="evidence" value="ECO:0007669"/>
    <property type="project" value="UniProtKB-KW"/>
</dbReference>
<dbReference type="GO" id="GO:0061603">
    <property type="term" value="F:molybdenum cofactor guanylyltransferase activity"/>
    <property type="evidence" value="ECO:0007669"/>
    <property type="project" value="UniProtKB-EC"/>
</dbReference>
<dbReference type="GO" id="GO:1902758">
    <property type="term" value="P:bis(molybdopterin guanine dinucleotide)molybdenum biosynthetic process"/>
    <property type="evidence" value="ECO:0007669"/>
    <property type="project" value="TreeGrafter"/>
</dbReference>
<dbReference type="CDD" id="cd02503">
    <property type="entry name" value="MobA"/>
    <property type="match status" value="1"/>
</dbReference>
<dbReference type="Gene3D" id="3.90.550.10">
    <property type="entry name" value="Spore Coat Polysaccharide Biosynthesis Protein SpsA, Chain A"/>
    <property type="match status" value="1"/>
</dbReference>
<dbReference type="HAMAP" id="MF_00316">
    <property type="entry name" value="MobA"/>
    <property type="match status" value="1"/>
</dbReference>
<dbReference type="InterPro" id="IPR025877">
    <property type="entry name" value="MobA-like_NTP_Trfase"/>
</dbReference>
<dbReference type="InterPro" id="IPR013482">
    <property type="entry name" value="Molybde_CF_guanTrfase"/>
</dbReference>
<dbReference type="InterPro" id="IPR029044">
    <property type="entry name" value="Nucleotide-diphossugar_trans"/>
</dbReference>
<dbReference type="NCBIfam" id="TIGR02665">
    <property type="entry name" value="molyb_mobA"/>
    <property type="match status" value="1"/>
</dbReference>
<dbReference type="PANTHER" id="PTHR19136">
    <property type="entry name" value="MOLYBDENUM COFACTOR GUANYLYLTRANSFERASE"/>
    <property type="match status" value="1"/>
</dbReference>
<dbReference type="PANTHER" id="PTHR19136:SF81">
    <property type="entry name" value="MOLYBDENUM COFACTOR GUANYLYLTRANSFERASE"/>
    <property type="match status" value="1"/>
</dbReference>
<dbReference type="Pfam" id="PF12804">
    <property type="entry name" value="NTP_transf_3"/>
    <property type="match status" value="1"/>
</dbReference>
<dbReference type="SUPFAM" id="SSF53448">
    <property type="entry name" value="Nucleotide-diphospho-sugar transferases"/>
    <property type="match status" value="1"/>
</dbReference>
<reference key="1">
    <citation type="submission" date="2007-04" db="EMBL/GenBank/DDBJ databases">
        <title>Complete sequence of Shewanella putrefaciens CN-32.</title>
        <authorList>
            <consortium name="US DOE Joint Genome Institute"/>
            <person name="Copeland A."/>
            <person name="Lucas S."/>
            <person name="Lapidus A."/>
            <person name="Barry K."/>
            <person name="Detter J.C."/>
            <person name="Glavina del Rio T."/>
            <person name="Hammon N."/>
            <person name="Israni S."/>
            <person name="Dalin E."/>
            <person name="Tice H."/>
            <person name="Pitluck S."/>
            <person name="Chain P."/>
            <person name="Malfatti S."/>
            <person name="Shin M."/>
            <person name="Vergez L."/>
            <person name="Schmutz J."/>
            <person name="Larimer F."/>
            <person name="Land M."/>
            <person name="Hauser L."/>
            <person name="Kyrpides N."/>
            <person name="Mikhailova N."/>
            <person name="Romine M.F."/>
            <person name="Fredrickson J."/>
            <person name="Tiedje J."/>
            <person name="Richardson P."/>
        </authorList>
    </citation>
    <scope>NUCLEOTIDE SEQUENCE [LARGE SCALE GENOMIC DNA]</scope>
    <source>
        <strain>CN-32 / ATCC BAA-453</strain>
    </source>
</reference>